<proteinExistence type="inferred from homology"/>
<accession>Q7Q412</accession>
<evidence type="ECO:0000255" key="1">
    <source>
        <dbReference type="HAMAP-Rule" id="MF_03144"/>
    </source>
</evidence>
<protein>
    <recommendedName>
        <fullName evidence="1">RNA-splicing ligase RtcB homolog</fullName>
        <ecNumber evidence="1">6.5.1.8</ecNumber>
    </recommendedName>
    <alternativeName>
        <fullName evidence="1">3'-phosphate/5'-hydroxy nucleic acid ligase</fullName>
    </alternativeName>
</protein>
<organism>
    <name type="scientific">Anopheles gambiae</name>
    <name type="common">African malaria mosquito</name>
    <dbReference type="NCBI Taxonomy" id="7165"/>
    <lineage>
        <taxon>Eukaryota</taxon>
        <taxon>Metazoa</taxon>
        <taxon>Ecdysozoa</taxon>
        <taxon>Arthropoda</taxon>
        <taxon>Hexapoda</taxon>
        <taxon>Insecta</taxon>
        <taxon>Pterygota</taxon>
        <taxon>Neoptera</taxon>
        <taxon>Endopterygota</taxon>
        <taxon>Diptera</taxon>
        <taxon>Nematocera</taxon>
        <taxon>Culicoidea</taxon>
        <taxon>Culicidae</taxon>
        <taxon>Anophelinae</taxon>
        <taxon>Anopheles</taxon>
    </lineage>
</organism>
<name>RTCB_ANOGA</name>
<comment type="function">
    <text evidence="1">Catalytic subunit of the tRNA-splicing ligase complex that acts by directly joining spliced tRNA halves to mature-sized tRNAs by incorporating the precursor-derived splice junction phosphate into the mature tRNA as a canonical 3',5'-phosphodiester. May act as an RNA ligase with broad substrate specificity, and may function toward other RNAs.</text>
</comment>
<comment type="catalytic activity">
    <reaction evidence="1">
        <text>a 3'-end 3'-phospho-ribonucleotide-RNA + a 5'-end dephospho-ribonucleoside-RNA + GTP = a ribonucleotidyl-ribonucleotide-RNA + GMP + diphosphate</text>
        <dbReference type="Rhea" id="RHEA:68076"/>
        <dbReference type="Rhea" id="RHEA-COMP:10463"/>
        <dbReference type="Rhea" id="RHEA-COMP:13936"/>
        <dbReference type="Rhea" id="RHEA-COMP:17355"/>
        <dbReference type="ChEBI" id="CHEBI:33019"/>
        <dbReference type="ChEBI" id="CHEBI:37565"/>
        <dbReference type="ChEBI" id="CHEBI:58115"/>
        <dbReference type="ChEBI" id="CHEBI:83062"/>
        <dbReference type="ChEBI" id="CHEBI:138284"/>
        <dbReference type="ChEBI" id="CHEBI:173118"/>
        <dbReference type="EC" id="6.5.1.8"/>
    </reaction>
</comment>
<comment type="catalytic activity">
    <reaction evidence="1">
        <text>a 3'-end 2',3'-cyclophospho-ribonucleotide-RNA + a 5'-end dephospho-ribonucleoside-RNA + GTP + H2O = a ribonucleotidyl-ribonucleotide-RNA + GMP + diphosphate + H(+)</text>
        <dbReference type="Rhea" id="RHEA:68080"/>
        <dbReference type="Rhea" id="RHEA-COMP:10464"/>
        <dbReference type="Rhea" id="RHEA-COMP:13936"/>
        <dbReference type="Rhea" id="RHEA-COMP:17355"/>
        <dbReference type="ChEBI" id="CHEBI:15377"/>
        <dbReference type="ChEBI" id="CHEBI:15378"/>
        <dbReference type="ChEBI" id="CHEBI:33019"/>
        <dbReference type="ChEBI" id="CHEBI:37565"/>
        <dbReference type="ChEBI" id="CHEBI:58115"/>
        <dbReference type="ChEBI" id="CHEBI:83064"/>
        <dbReference type="ChEBI" id="CHEBI:138284"/>
        <dbReference type="ChEBI" id="CHEBI:173118"/>
        <dbReference type="EC" id="6.5.1.8"/>
    </reaction>
</comment>
<comment type="cofactor">
    <cofactor evidence="1">
        <name>Mn(2+)</name>
        <dbReference type="ChEBI" id="CHEBI:29035"/>
    </cofactor>
    <text evidence="1">Binds 2 manganese ions per subunit.</text>
</comment>
<comment type="subunit">
    <text evidence="1">Catalytic component of the tRNA-splicing ligase complex.</text>
</comment>
<comment type="miscellaneous">
    <text evidence="1">Ligation probably proceeds through 3 nucleotidyl transfer steps, with 2',3'-cyclic phosphate termini being hydrolyzed to 3'-P termini in a step that precedes 3'-P activation with GMP. In the first nucleotidyl transfer step, RTCB reacts with GTP to form a covalent RTCB-histidine-GMP intermediate with release of PPi; in the second step, the GMP moiety is transferred to the RNA 3'-P; in the third step, the 5'-OH from the opposite RNA strand attacks the activated 3'-P to form a 3',5'-phosphodiester bond and release GMP.</text>
</comment>
<comment type="similarity">
    <text evidence="1">Belongs to the RtcB family.</text>
</comment>
<dbReference type="EC" id="6.5.1.8" evidence="1"/>
<dbReference type="EMBL" id="AAAB01008964">
    <property type="protein sequence ID" value="EAA12412.2"/>
    <property type="molecule type" value="Genomic_DNA"/>
</dbReference>
<dbReference type="SMR" id="Q7Q412"/>
<dbReference type="FunCoup" id="Q7Q412">
    <property type="interactions" value="1673"/>
</dbReference>
<dbReference type="STRING" id="7165.Q7Q412"/>
<dbReference type="PaxDb" id="7165-AGAP008147-PA"/>
<dbReference type="EnsemblMetazoa" id="AGAP008147-RA">
    <property type="protein sequence ID" value="AGAP008147-PA"/>
    <property type="gene ID" value="AGAP008147"/>
</dbReference>
<dbReference type="GeneID" id="1277815"/>
<dbReference type="KEGG" id="aga:1277815"/>
<dbReference type="CTD" id="51493"/>
<dbReference type="VEuPathDB" id="VectorBase:AGAMI1_006417"/>
<dbReference type="VEuPathDB" id="VectorBase:AGAP008147"/>
<dbReference type="eggNOG" id="KOG3833">
    <property type="taxonomic scope" value="Eukaryota"/>
</dbReference>
<dbReference type="HOGENOM" id="CLU_022279_0_0_1"/>
<dbReference type="InParanoid" id="Q7Q412"/>
<dbReference type="OMA" id="QTRGVEC"/>
<dbReference type="OrthoDB" id="10249697at2759"/>
<dbReference type="PhylomeDB" id="Q7Q412"/>
<dbReference type="Proteomes" id="UP000007062">
    <property type="component" value="Chromosome 3R"/>
</dbReference>
<dbReference type="GO" id="GO:0005634">
    <property type="term" value="C:nucleus"/>
    <property type="evidence" value="ECO:0000318"/>
    <property type="project" value="GO_Central"/>
</dbReference>
<dbReference type="GO" id="GO:0072669">
    <property type="term" value="C:tRNA-splicing ligase complex"/>
    <property type="evidence" value="ECO:0000318"/>
    <property type="project" value="GO_Central"/>
</dbReference>
<dbReference type="GO" id="GO:0005525">
    <property type="term" value="F:GTP binding"/>
    <property type="evidence" value="ECO:0007669"/>
    <property type="project" value="UniProtKB-KW"/>
</dbReference>
<dbReference type="GO" id="GO:0046872">
    <property type="term" value="F:metal ion binding"/>
    <property type="evidence" value="ECO:0007669"/>
    <property type="project" value="UniProtKB-KW"/>
</dbReference>
<dbReference type="GO" id="GO:0170057">
    <property type="term" value="F:RNA ligase (GTP) activity"/>
    <property type="evidence" value="ECO:0007669"/>
    <property type="project" value="UniProtKB-EC"/>
</dbReference>
<dbReference type="GO" id="GO:0006388">
    <property type="term" value="P:tRNA splicing, via endonucleolytic cleavage and ligation"/>
    <property type="evidence" value="ECO:0000318"/>
    <property type="project" value="GO_Central"/>
</dbReference>
<dbReference type="FunFam" id="3.90.1860.10:FF:000001">
    <property type="entry name" value="tRNA-splicing ligase RtcB homolog"/>
    <property type="match status" value="1"/>
</dbReference>
<dbReference type="Gene3D" id="3.90.1860.10">
    <property type="entry name" value="tRNA-splicing ligase RtcB"/>
    <property type="match status" value="1"/>
</dbReference>
<dbReference type="HAMAP" id="MF_03144">
    <property type="entry name" value="RtcB_euk"/>
    <property type="match status" value="1"/>
</dbReference>
<dbReference type="InterPro" id="IPR001233">
    <property type="entry name" value="RtcB"/>
</dbReference>
<dbReference type="InterPro" id="IPR036025">
    <property type="entry name" value="RtcB-like_sf"/>
</dbReference>
<dbReference type="InterPro" id="IPR027513">
    <property type="entry name" value="RtcB_euk"/>
</dbReference>
<dbReference type="PANTHER" id="PTHR11118">
    <property type="entry name" value="RNA-SPLICING LIGASE RTCB HOMOLOG"/>
    <property type="match status" value="1"/>
</dbReference>
<dbReference type="PANTHER" id="PTHR11118:SF1">
    <property type="entry name" value="RNA-SPLICING LIGASE RTCB HOMOLOG"/>
    <property type="match status" value="1"/>
</dbReference>
<dbReference type="Pfam" id="PF01139">
    <property type="entry name" value="RtcB"/>
    <property type="match status" value="1"/>
</dbReference>
<dbReference type="SUPFAM" id="SSF103365">
    <property type="entry name" value="Hypothetical protein PH1602"/>
    <property type="match status" value="1"/>
</dbReference>
<dbReference type="PROSITE" id="PS01288">
    <property type="entry name" value="UPF0027"/>
    <property type="match status" value="1"/>
</dbReference>
<feature type="chain" id="PRO_0000407223" description="RNA-splicing ligase RtcB homolog">
    <location>
        <begin position="1"/>
        <end position="506"/>
    </location>
</feature>
<feature type="active site" description="GMP-histidine intermediate" evidence="1">
    <location>
        <position position="429"/>
    </location>
</feature>
<feature type="binding site" evidence="1">
    <location>
        <position position="120"/>
    </location>
    <ligand>
        <name>Mn(2+)</name>
        <dbReference type="ChEBI" id="CHEBI:29035"/>
        <label>1</label>
    </ligand>
</feature>
<feature type="binding site" evidence="1">
    <location>
        <position position="123"/>
    </location>
    <ligand>
        <name>Mn(2+)</name>
        <dbReference type="ChEBI" id="CHEBI:29035"/>
        <label>1</label>
    </ligand>
</feature>
<feature type="binding site" evidence="1">
    <location>
        <position position="123"/>
    </location>
    <ligand>
        <name>Mn(2+)</name>
        <dbReference type="ChEBI" id="CHEBI:29035"/>
        <label>2</label>
    </ligand>
</feature>
<feature type="binding site" evidence="1">
    <location>
        <begin position="227"/>
        <end position="231"/>
    </location>
    <ligand>
        <name>GMP</name>
        <dbReference type="ChEBI" id="CHEBI:58115"/>
    </ligand>
</feature>
<feature type="binding site" evidence="1">
    <location>
        <position position="228"/>
    </location>
    <ligand>
        <name>Mn(2+)</name>
        <dbReference type="ChEBI" id="CHEBI:29035"/>
        <label>1</label>
    </ligand>
</feature>
<feature type="binding site" evidence="1">
    <location>
        <position position="260"/>
    </location>
    <ligand>
        <name>Mn(2+)</name>
        <dbReference type="ChEBI" id="CHEBI:29035"/>
        <label>2</label>
    </ligand>
</feature>
<feature type="binding site" evidence="1">
    <location>
        <begin position="354"/>
        <end position="355"/>
    </location>
    <ligand>
        <name>GMP</name>
        <dbReference type="ChEBI" id="CHEBI:58115"/>
    </ligand>
</feature>
<feature type="binding site" evidence="1">
    <location>
        <position position="354"/>
    </location>
    <ligand>
        <name>Mn(2+)</name>
        <dbReference type="ChEBI" id="CHEBI:29035"/>
        <label>2</label>
    </ligand>
</feature>
<feature type="binding site" evidence="1">
    <location>
        <begin position="403"/>
        <end position="406"/>
    </location>
    <ligand>
        <name>GMP</name>
        <dbReference type="ChEBI" id="CHEBI:58115"/>
    </ligand>
</feature>
<feature type="binding site" evidence="1">
    <location>
        <position position="410"/>
    </location>
    <ligand>
        <name>GMP</name>
        <dbReference type="ChEBI" id="CHEBI:58115"/>
    </ligand>
</feature>
<feature type="binding site" evidence="1">
    <location>
        <begin position="429"/>
        <end position="432"/>
    </location>
    <ligand>
        <name>GMP</name>
        <dbReference type="ChEBI" id="CHEBI:58115"/>
    </ligand>
</feature>
<feature type="binding site" evidence="1">
    <location>
        <position position="505"/>
    </location>
    <ligand>
        <name>GMP</name>
        <dbReference type="ChEBI" id="CHEBI:58115"/>
    </ligand>
</feature>
<keyword id="KW-0342">GTP-binding</keyword>
<keyword id="KW-0436">Ligase</keyword>
<keyword id="KW-0464">Manganese</keyword>
<keyword id="KW-0479">Metal-binding</keyword>
<keyword id="KW-0547">Nucleotide-binding</keyword>
<keyword id="KW-1185">Reference proteome</keyword>
<keyword id="KW-0819">tRNA processing</keyword>
<sequence>MVVREYNEEMKYIERLSPNSFLIKKGFQSNMNVEGIFYANSRLEKLMFDELRNACRPGMTGGFLPGVKQIANVAALPGIVGRSVGLPDIHSGYGFAIGNMAAFDMSDPTSIVSPGGVGFDINCGVRLLRTNLFEKDVQPVKEQLAQSLFDHIPVGVGSKGIIPMNAHDLEEALEMGMDWSLREGYVWAEDKEHCEEYGRMLNADPSKVSLRAKKRGLPQLGTLGAGNHYAEIQVVEEIYDKYAASKMGIEELGQICVMIHSGSRGFGHQVATDALVEMEKAMKRDKIETNDRQLACARINSPEGQNYLKAMSAAANFAWVNRSSMTFLTRQAFAKQFNTTPDDLDMHVIYDVSHNVAKMEEHMVNGRPKQLLVHRKGSTRAFPPHHPLIPVDYQLTGQPVLVGGSMGTCSFVLTGTETGMVETFGSTCHGAGRSLSRAKSRRNLDYKDVLRDLEEKGISIRVASPKLVQEEAPDSYKDVRDVVQTCHDVGISNKAIKLRPIAVIKG</sequence>
<reference key="1">
    <citation type="journal article" date="2002" name="Science">
        <title>The genome sequence of the malaria mosquito Anopheles gambiae.</title>
        <authorList>
            <person name="Holt R.A."/>
            <person name="Subramanian G.M."/>
            <person name="Halpern A."/>
            <person name="Sutton G.G."/>
            <person name="Charlab R."/>
            <person name="Nusskern D.R."/>
            <person name="Wincker P."/>
            <person name="Clark A.G."/>
            <person name="Ribeiro J.M.C."/>
            <person name="Wides R."/>
            <person name="Salzberg S.L."/>
            <person name="Loftus B.J."/>
            <person name="Yandell M.D."/>
            <person name="Majoros W.H."/>
            <person name="Rusch D.B."/>
            <person name="Lai Z."/>
            <person name="Kraft C.L."/>
            <person name="Abril J.F."/>
            <person name="Anthouard V."/>
            <person name="Arensburger P."/>
            <person name="Atkinson P.W."/>
            <person name="Baden H."/>
            <person name="de Berardinis V."/>
            <person name="Baldwin D."/>
            <person name="Benes V."/>
            <person name="Biedler J."/>
            <person name="Blass C."/>
            <person name="Bolanos R."/>
            <person name="Boscus D."/>
            <person name="Barnstead M."/>
            <person name="Cai S."/>
            <person name="Center A."/>
            <person name="Chaturverdi K."/>
            <person name="Christophides G.K."/>
            <person name="Chrystal M.A.M."/>
            <person name="Clamp M."/>
            <person name="Cravchik A."/>
            <person name="Curwen V."/>
            <person name="Dana A."/>
            <person name="Delcher A."/>
            <person name="Dew I."/>
            <person name="Evans C.A."/>
            <person name="Flanigan M."/>
            <person name="Grundschober-Freimoser A."/>
            <person name="Friedli L."/>
            <person name="Gu Z."/>
            <person name="Guan P."/>
            <person name="Guigo R."/>
            <person name="Hillenmeyer M.E."/>
            <person name="Hladun S.L."/>
            <person name="Hogan J.R."/>
            <person name="Hong Y.S."/>
            <person name="Hoover J."/>
            <person name="Jaillon O."/>
            <person name="Ke Z."/>
            <person name="Kodira C.D."/>
            <person name="Kokoza E."/>
            <person name="Koutsos A."/>
            <person name="Letunic I."/>
            <person name="Levitsky A.A."/>
            <person name="Liang Y."/>
            <person name="Lin J.-J."/>
            <person name="Lobo N.F."/>
            <person name="Lopez J.R."/>
            <person name="Malek J.A."/>
            <person name="McIntosh T.C."/>
            <person name="Meister S."/>
            <person name="Miller J.R."/>
            <person name="Mobarry C."/>
            <person name="Mongin E."/>
            <person name="Murphy S.D."/>
            <person name="O'Brochta D.A."/>
            <person name="Pfannkoch C."/>
            <person name="Qi R."/>
            <person name="Regier M.A."/>
            <person name="Remington K."/>
            <person name="Shao H."/>
            <person name="Sharakhova M.V."/>
            <person name="Sitter C.D."/>
            <person name="Shetty J."/>
            <person name="Smith T.J."/>
            <person name="Strong R."/>
            <person name="Sun J."/>
            <person name="Thomasova D."/>
            <person name="Ton L.Q."/>
            <person name="Topalis P."/>
            <person name="Tu Z.J."/>
            <person name="Unger M.F."/>
            <person name="Walenz B."/>
            <person name="Wang A.H."/>
            <person name="Wang J."/>
            <person name="Wang M."/>
            <person name="Wang X."/>
            <person name="Woodford K.J."/>
            <person name="Wortman J.R."/>
            <person name="Wu M."/>
            <person name="Yao A."/>
            <person name="Zdobnov E.M."/>
            <person name="Zhang H."/>
            <person name="Zhao Q."/>
            <person name="Zhao S."/>
            <person name="Zhu S.C."/>
            <person name="Zhimulev I."/>
            <person name="Coluzzi M."/>
            <person name="della Torre A."/>
            <person name="Roth C.W."/>
            <person name="Louis C."/>
            <person name="Kalush F."/>
            <person name="Mural R.J."/>
            <person name="Myers E.W."/>
            <person name="Adams M.D."/>
            <person name="Smith H.O."/>
            <person name="Broder S."/>
            <person name="Gardner M.J."/>
            <person name="Fraser C.M."/>
            <person name="Birney E."/>
            <person name="Bork P."/>
            <person name="Brey P.T."/>
            <person name="Venter J.C."/>
            <person name="Weissenbach J."/>
            <person name="Kafatos F.C."/>
            <person name="Collins F.H."/>
            <person name="Hoffman S.L."/>
        </authorList>
    </citation>
    <scope>NUCLEOTIDE SEQUENCE [LARGE SCALE GENOMIC DNA]</scope>
    <source>
        <strain>PEST</strain>
    </source>
</reference>
<gene>
    <name type="ORF">AGAP008147</name>
</gene>